<proteinExistence type="evidence at transcript level"/>
<dbReference type="EMBL" id="CR761003">
    <property type="protein sequence ID" value="CAJ82138.1"/>
    <property type="molecule type" value="mRNA"/>
</dbReference>
<dbReference type="EMBL" id="BC061352">
    <property type="protein sequence ID" value="AAH61352.1"/>
    <property type="molecule type" value="mRNA"/>
</dbReference>
<dbReference type="RefSeq" id="NP_989049.1">
    <property type="nucleotide sequence ID" value="NM_203718.1"/>
</dbReference>
<dbReference type="SMR" id="Q6P877"/>
<dbReference type="FunCoup" id="Q6P877">
    <property type="interactions" value="2006"/>
</dbReference>
<dbReference type="STRING" id="8364.ENSXETP00000017881"/>
<dbReference type="DNASU" id="394646"/>
<dbReference type="GeneID" id="394646"/>
<dbReference type="KEGG" id="xtr:394646"/>
<dbReference type="AGR" id="Xenbase:XB-GENE-489445"/>
<dbReference type="CTD" id="11047"/>
<dbReference type="Xenbase" id="XB-GENE-489445">
    <property type="gene designation" value="adrm1"/>
</dbReference>
<dbReference type="InParanoid" id="Q6P877"/>
<dbReference type="OMA" id="SNQRHFF"/>
<dbReference type="OrthoDB" id="340431at2759"/>
<dbReference type="Reactome" id="R-XTR-1169091">
    <property type="pathway name" value="Activation of NF-kappaB in B cells"/>
</dbReference>
<dbReference type="Reactome" id="R-XTR-1234176">
    <property type="pathway name" value="Oxygen-dependent proline hydroxylation of Hypoxia-inducible Factor Alpha"/>
</dbReference>
<dbReference type="Reactome" id="R-XTR-1236978">
    <property type="pathway name" value="Cross-presentation of soluble exogenous antigens (endosomes)"/>
</dbReference>
<dbReference type="Reactome" id="R-XTR-174084">
    <property type="pathway name" value="Autodegradation of Cdh1 by Cdh1:APC/C"/>
</dbReference>
<dbReference type="Reactome" id="R-XTR-174113">
    <property type="pathway name" value="SCF-beta-TrCP mediated degradation of Emi1"/>
</dbReference>
<dbReference type="Reactome" id="R-XTR-174154">
    <property type="pathway name" value="APC/C:Cdc20 mediated degradation of Securin"/>
</dbReference>
<dbReference type="Reactome" id="R-XTR-174178">
    <property type="pathway name" value="APC/C:Cdh1 mediated degradation of Cdc20 and other APC/C:Cdh1 targeted proteins in late mitosis/early G1"/>
</dbReference>
<dbReference type="Reactome" id="R-XTR-174184">
    <property type="pathway name" value="Cdc20:Phospho-APC/C mediated degradation of Cyclin A"/>
</dbReference>
<dbReference type="Reactome" id="R-XTR-187577">
    <property type="pathway name" value="SCF(Skp2)-mediated degradation of p27/p21"/>
</dbReference>
<dbReference type="Reactome" id="R-XTR-2467813">
    <property type="pathway name" value="Separation of Sister Chromatids"/>
</dbReference>
<dbReference type="Reactome" id="R-XTR-349425">
    <property type="pathway name" value="Autodegradation of the E3 ubiquitin ligase COP1"/>
</dbReference>
<dbReference type="Reactome" id="R-XTR-350562">
    <property type="pathway name" value="Regulation of ornithine decarboxylase (ODC)"/>
</dbReference>
<dbReference type="Reactome" id="R-XTR-382556">
    <property type="pathway name" value="ABC-family proteins mediated transport"/>
</dbReference>
<dbReference type="Reactome" id="R-XTR-450408">
    <property type="pathway name" value="AUF1 (hnRNP D0) binds and destabilizes mRNA"/>
</dbReference>
<dbReference type="Reactome" id="R-XTR-4608870">
    <property type="pathway name" value="Asymmetric localization of PCP proteins"/>
</dbReference>
<dbReference type="Reactome" id="R-XTR-4641257">
    <property type="pathway name" value="Degradation of AXIN"/>
</dbReference>
<dbReference type="Reactome" id="R-XTR-5358346">
    <property type="pathway name" value="Hedgehog ligand biogenesis"/>
</dbReference>
<dbReference type="Reactome" id="R-XTR-5610780">
    <property type="pathway name" value="Degradation of GLI1 by the proteasome"/>
</dbReference>
<dbReference type="Reactome" id="R-XTR-5610785">
    <property type="pathway name" value="GLI3 is processed to GLI3R by the proteasome"/>
</dbReference>
<dbReference type="Reactome" id="R-XTR-5632684">
    <property type="pathway name" value="Hedgehog 'on' state"/>
</dbReference>
<dbReference type="Reactome" id="R-XTR-5668541">
    <property type="pathway name" value="TNFR2 non-canonical NF-kB pathway"/>
</dbReference>
<dbReference type="Reactome" id="R-XTR-5687128">
    <property type="pathway name" value="MAPK6/MAPK4 signaling"/>
</dbReference>
<dbReference type="Reactome" id="R-XTR-5689603">
    <property type="pathway name" value="UCH proteinases"/>
</dbReference>
<dbReference type="Reactome" id="R-XTR-5689880">
    <property type="pathway name" value="Ub-specific processing proteases"/>
</dbReference>
<dbReference type="Reactome" id="R-XTR-68867">
    <property type="pathway name" value="Assembly of the pre-replicative complex"/>
</dbReference>
<dbReference type="Reactome" id="R-XTR-68949">
    <property type="pathway name" value="Orc1 removal from chromatin"/>
</dbReference>
<dbReference type="Reactome" id="R-XTR-69017">
    <property type="pathway name" value="CDK-mediated phosphorylation and removal of Cdc6"/>
</dbReference>
<dbReference type="Reactome" id="R-XTR-69481">
    <property type="pathway name" value="G2/M Checkpoints"/>
</dbReference>
<dbReference type="Reactome" id="R-XTR-69601">
    <property type="pathway name" value="Ubiquitin Mediated Degradation of Phosphorylated Cdc25A"/>
</dbReference>
<dbReference type="Reactome" id="R-XTR-75815">
    <property type="pathway name" value="Ubiquitin-dependent degradation of Cyclin D"/>
</dbReference>
<dbReference type="Reactome" id="R-XTR-8852276">
    <property type="pathway name" value="The role of GTSE1 in G2/M progression after G2 checkpoint"/>
</dbReference>
<dbReference type="Reactome" id="R-XTR-8854050">
    <property type="pathway name" value="FBXL7 down-regulates AURKA during mitotic entry and in early mitosis"/>
</dbReference>
<dbReference type="Reactome" id="R-XTR-8939236">
    <property type="pathway name" value="RUNX1 regulates transcription of genes involved in differentiation of HSCs"/>
</dbReference>
<dbReference type="Reactome" id="R-XTR-8939902">
    <property type="pathway name" value="Regulation of RUNX2 expression and activity"/>
</dbReference>
<dbReference type="Reactome" id="R-XTR-8948751">
    <property type="pathway name" value="Regulation of PTEN stability and activity"/>
</dbReference>
<dbReference type="Reactome" id="R-XTR-8951664">
    <property type="pathway name" value="Neddylation"/>
</dbReference>
<dbReference type="Reactome" id="R-XTR-9755511">
    <property type="pathway name" value="KEAP1-NFE2L2 pathway"/>
</dbReference>
<dbReference type="Reactome" id="R-XTR-9762114">
    <property type="pathway name" value="GSK3B and BTRC:CUL1-mediated-degradation of NFE2L2"/>
</dbReference>
<dbReference type="Reactome" id="R-XTR-983168">
    <property type="pathway name" value="Antigen processing: Ubiquitination &amp; Proteasome degradation"/>
</dbReference>
<dbReference type="Reactome" id="R-XTR-9907900">
    <property type="pathway name" value="Proteasome assembly"/>
</dbReference>
<dbReference type="Proteomes" id="UP000008143">
    <property type="component" value="Chromosome 10"/>
</dbReference>
<dbReference type="Bgee" id="ENSXETG00000002006">
    <property type="expression patterns" value="Expressed in neurula embryo and 13 other cell types or tissues"/>
</dbReference>
<dbReference type="ExpressionAtlas" id="Q6P877">
    <property type="expression patterns" value="baseline and differential"/>
</dbReference>
<dbReference type="GO" id="GO:0005737">
    <property type="term" value="C:cytoplasm"/>
    <property type="evidence" value="ECO:0007669"/>
    <property type="project" value="UniProtKB-SubCell"/>
</dbReference>
<dbReference type="GO" id="GO:0005634">
    <property type="term" value="C:nucleus"/>
    <property type="evidence" value="ECO:0007669"/>
    <property type="project" value="UniProtKB-SubCell"/>
</dbReference>
<dbReference type="GO" id="GO:0000502">
    <property type="term" value="C:proteasome complex"/>
    <property type="evidence" value="ECO:0000250"/>
    <property type="project" value="UniProtKB"/>
</dbReference>
<dbReference type="GO" id="GO:0061133">
    <property type="term" value="F:endopeptidase activator activity"/>
    <property type="evidence" value="ECO:0000250"/>
    <property type="project" value="UniProtKB"/>
</dbReference>
<dbReference type="GO" id="GO:0043248">
    <property type="term" value="P:proteasome assembly"/>
    <property type="evidence" value="ECO:0000250"/>
    <property type="project" value="UniProtKB"/>
</dbReference>
<dbReference type="CDD" id="cd13314">
    <property type="entry name" value="PH_Rpn13"/>
    <property type="match status" value="1"/>
</dbReference>
<dbReference type="FunFam" id="1.10.2020.20:FF:000001">
    <property type="entry name" value="Proteasomal ubiquitin receptor ADRM1"/>
    <property type="match status" value="1"/>
</dbReference>
<dbReference type="FunFam" id="2.30.29.70:FF:000001">
    <property type="entry name" value="Proteasomal ubiquitin receptor ADRM1"/>
    <property type="match status" value="1"/>
</dbReference>
<dbReference type="Gene3D" id="1.10.2020.20">
    <property type="match status" value="1"/>
</dbReference>
<dbReference type="Gene3D" id="2.30.29.70">
    <property type="entry name" value="Proteasomal ubiquitin receptor Rpn13/ADRM1"/>
    <property type="match status" value="1"/>
</dbReference>
<dbReference type="InterPro" id="IPR044867">
    <property type="entry name" value="DEUBAD_dom"/>
</dbReference>
<dbReference type="InterPro" id="IPR006773">
    <property type="entry name" value="Rpn13/ADRM1"/>
</dbReference>
<dbReference type="InterPro" id="IPR044868">
    <property type="entry name" value="Rpn13/ADRM1_Pru"/>
</dbReference>
<dbReference type="InterPro" id="IPR038633">
    <property type="entry name" value="Rpn13/ADRM1_Pru_sf"/>
</dbReference>
<dbReference type="InterPro" id="IPR032368">
    <property type="entry name" value="RPN13_DEUBAD"/>
</dbReference>
<dbReference type="InterPro" id="IPR038108">
    <property type="entry name" value="RPN13_DEUBAD_sf"/>
</dbReference>
<dbReference type="PANTHER" id="PTHR12225">
    <property type="entry name" value="ADHESION REGULATING MOLECULE 1 110 KDA CELL MEMBRANE GLYCOPROTEIN"/>
    <property type="match status" value="1"/>
</dbReference>
<dbReference type="PANTHER" id="PTHR12225:SF0">
    <property type="entry name" value="PROTEASOMAL UBIQUITIN RECEPTOR ADRM1"/>
    <property type="match status" value="1"/>
</dbReference>
<dbReference type="Pfam" id="PF04683">
    <property type="entry name" value="Rpn13_ADRM1_Pru"/>
    <property type="match status" value="1"/>
</dbReference>
<dbReference type="Pfam" id="PF16550">
    <property type="entry name" value="RPN13_C"/>
    <property type="match status" value="1"/>
</dbReference>
<dbReference type="PROSITE" id="PS51916">
    <property type="entry name" value="DEUBAD"/>
    <property type="match status" value="1"/>
</dbReference>
<dbReference type="PROSITE" id="PS51917">
    <property type="entry name" value="PRU"/>
    <property type="match status" value="1"/>
</dbReference>
<comment type="function">
    <text evidence="1">Component of the 26S proteasome, a multiprotein complex involved in the ATP-dependent degradation of ubiquitinated proteins. This complex plays a key role in the maintenance of protein homeostasis by removing misfolded or damaged proteins, which could impair cellular functions, and by removing proteins whose functions are no longer required. Therefore, the proteasome participates in numerous cellular processes, including cell cycle progression, apoptosis, or DNA damage repair. Within the complex, functions as a proteasomal ubiquitin receptor.</text>
</comment>
<comment type="subunit">
    <text evidence="1">Component of the 19S proteasome regulatory particle complex. The 26S proteasome consists of a 20S core particle (CP) and two 19S regulatory subunits (RP).</text>
</comment>
<comment type="subcellular location">
    <subcellularLocation>
        <location evidence="1">Cytoplasm</location>
    </subcellularLocation>
    <subcellularLocation>
        <location evidence="1">Nucleus</location>
    </subcellularLocation>
</comment>
<comment type="similarity">
    <text evidence="5">Belongs to the ADRM1 family.</text>
</comment>
<sequence>MSSGALFPSLVPGSRGSSSKYLVEFRAGKMSLKGSTVTPDKRKGLVYIQQTDDSLIHFCWKDRTSGSVEDDLIIFPDDCEFKRVSQCTTGRVYVLKFKAGSKRLFFWMQEPKTDKDEEYCRKVNEYLNNPPMPGALGGSGSGGHELSALGGEGGLQSLLGNMSHNQLMQLIGPTGLGGLGGLGALTGPGLASLLGSGGPTTSSSSSSSRSQSAAVTPSSTTSSTRTTSAPAAPAAAPATTPSPAVSSNDGASAATSPTQPIQLSDLQNILATMNVPATGEGGQQVDLASVLTPEIMAPILANAEVQERLMPYLPSGESLPQTADEIQNTLTSPQFQQALSMFSAALASGQLGPLMSQFGLPADAVDAANKGDIEAFAKAMQTTSSQKERESSEKKEEEEDMSLD</sequence>
<evidence type="ECO:0000250" key="1">
    <source>
        <dbReference type="UniProtKB" id="Q16186"/>
    </source>
</evidence>
<evidence type="ECO:0000255" key="2">
    <source>
        <dbReference type="PROSITE-ProRule" id="PRU01264"/>
    </source>
</evidence>
<evidence type="ECO:0000255" key="3">
    <source>
        <dbReference type="PROSITE-ProRule" id="PRU01265"/>
    </source>
</evidence>
<evidence type="ECO:0000256" key="4">
    <source>
        <dbReference type="SAM" id="MobiDB-lite"/>
    </source>
</evidence>
<evidence type="ECO:0000305" key="5"/>
<accession>Q6P877</accession>
<feature type="chain" id="PRO_0000286074" description="Proteasomal ubiquitin receptor ADRM1">
    <location>
        <begin position="1"/>
        <end position="404"/>
    </location>
</feature>
<feature type="domain" description="Pru" evidence="3">
    <location>
        <begin position="17"/>
        <end position="130"/>
    </location>
</feature>
<feature type="domain" description="DEUBAD" evidence="2">
    <location>
        <begin position="278"/>
        <end position="390"/>
    </location>
</feature>
<feature type="region of interest" description="Disordered" evidence="4">
    <location>
        <begin position="195"/>
        <end position="258"/>
    </location>
</feature>
<feature type="region of interest" description="Disordered" evidence="4">
    <location>
        <begin position="377"/>
        <end position="404"/>
    </location>
</feature>
<feature type="compositionally biased region" description="Low complexity" evidence="4">
    <location>
        <begin position="195"/>
        <end position="247"/>
    </location>
</feature>
<feature type="compositionally biased region" description="Polar residues" evidence="4">
    <location>
        <begin position="248"/>
        <end position="258"/>
    </location>
</feature>
<feature type="compositionally biased region" description="Basic and acidic residues" evidence="4">
    <location>
        <begin position="386"/>
        <end position="395"/>
    </location>
</feature>
<gene>
    <name type="primary">adrm1</name>
    <name type="ORF">TEgg050m05.1</name>
</gene>
<name>ADRM1_XENTR</name>
<organism>
    <name type="scientific">Xenopus tropicalis</name>
    <name type="common">Western clawed frog</name>
    <name type="synonym">Silurana tropicalis</name>
    <dbReference type="NCBI Taxonomy" id="8364"/>
    <lineage>
        <taxon>Eukaryota</taxon>
        <taxon>Metazoa</taxon>
        <taxon>Chordata</taxon>
        <taxon>Craniata</taxon>
        <taxon>Vertebrata</taxon>
        <taxon>Euteleostomi</taxon>
        <taxon>Amphibia</taxon>
        <taxon>Batrachia</taxon>
        <taxon>Anura</taxon>
        <taxon>Pipoidea</taxon>
        <taxon>Pipidae</taxon>
        <taxon>Xenopodinae</taxon>
        <taxon>Xenopus</taxon>
        <taxon>Silurana</taxon>
    </lineage>
</organism>
<protein>
    <recommendedName>
        <fullName>Proteasomal ubiquitin receptor ADRM1</fullName>
    </recommendedName>
</protein>
<reference key="1">
    <citation type="submission" date="2006-10" db="EMBL/GenBank/DDBJ databases">
        <authorList>
            <consortium name="Sanger Xenopus tropicalis EST/cDNA project"/>
        </authorList>
    </citation>
    <scope>NUCLEOTIDE SEQUENCE [LARGE SCALE MRNA]</scope>
    <source>
        <tissue>Egg</tissue>
    </source>
</reference>
<reference key="2">
    <citation type="submission" date="2003-11" db="EMBL/GenBank/DDBJ databases">
        <authorList>
            <consortium name="NIH - Xenopus Gene Collection (XGC) project"/>
        </authorList>
    </citation>
    <scope>NUCLEOTIDE SEQUENCE [LARGE SCALE MRNA]</scope>
    <source>
        <tissue>Neurula</tissue>
    </source>
</reference>
<keyword id="KW-0963">Cytoplasm</keyword>
<keyword id="KW-0539">Nucleus</keyword>
<keyword id="KW-0647">Proteasome</keyword>
<keyword id="KW-1185">Reference proteome</keyword>